<gene>
    <name evidence="4" type="primary">attf-4</name>
    <name evidence="4" type="ORF">C05D10.1</name>
</gene>
<comment type="alternative products">
    <event type="alternative splicing"/>
    <isoform>
        <id>Q11178-1</id>
        <name evidence="4">a</name>
        <sequence type="displayed"/>
    </isoform>
    <isoform>
        <id>Q11178-2</id>
        <name evidence="5">b</name>
        <sequence type="described" ref="VSP_057815 VSP_057816"/>
    </isoform>
    <isoform>
        <id>Q11178-3</id>
        <name evidence="6">c</name>
        <sequence type="described" ref="VSP_057814"/>
    </isoform>
</comment>
<dbReference type="EMBL" id="BX284603">
    <property type="protein sequence ID" value="CCD63171.1"/>
    <property type="molecule type" value="Genomic_DNA"/>
</dbReference>
<dbReference type="EMBL" id="BX284603">
    <property type="protein sequence ID" value="CCD63172.1"/>
    <property type="molecule type" value="Genomic_DNA"/>
</dbReference>
<dbReference type="EMBL" id="FO080362">
    <property type="protein sequence ID" value="CCD63170.1"/>
    <property type="molecule type" value="Genomic_DNA"/>
</dbReference>
<dbReference type="PIR" id="A88474">
    <property type="entry name" value="A88474"/>
</dbReference>
<dbReference type="RefSeq" id="NP_001021144.1">
    <property type="nucleotide sequence ID" value="NM_001025973.4"/>
</dbReference>
<dbReference type="RefSeq" id="NP_001367435.1">
    <molecule id="Q11178-3"/>
    <property type="nucleotide sequence ID" value="NM_001379742.1"/>
</dbReference>
<dbReference type="RefSeq" id="NP_741168.1">
    <molecule id="Q11178-1"/>
    <property type="nucleotide sequence ID" value="NM_171147.7"/>
</dbReference>
<dbReference type="RefSeq" id="NP_741169.1">
    <property type="nucleotide sequence ID" value="NM_171148.3"/>
</dbReference>
<dbReference type="BioGRID" id="41079">
    <property type="interactions" value="17"/>
</dbReference>
<dbReference type="FunCoup" id="Q11178">
    <property type="interactions" value="264"/>
</dbReference>
<dbReference type="IntAct" id="Q11178">
    <property type="interactions" value="15"/>
</dbReference>
<dbReference type="STRING" id="6239.C05D10.1a.1"/>
<dbReference type="iPTMnet" id="Q11178"/>
<dbReference type="PaxDb" id="6239-C05D10.1a"/>
<dbReference type="PeptideAtlas" id="Q11178"/>
<dbReference type="EnsemblMetazoa" id="C05D10.1a.1">
    <molecule id="Q11178-1"/>
    <property type="protein sequence ID" value="C05D10.1a.1"/>
    <property type="gene ID" value="WBGene00015477"/>
</dbReference>
<dbReference type="EnsemblMetazoa" id="C05D10.1b.1">
    <property type="protein sequence ID" value="C05D10.1b.1"/>
    <property type="gene ID" value="WBGene00015477"/>
</dbReference>
<dbReference type="EnsemblMetazoa" id="C05D10.1c.1">
    <molecule id="Q11178-3"/>
    <property type="protein sequence ID" value="C05D10.1c.1"/>
    <property type="gene ID" value="WBGene00015477"/>
</dbReference>
<dbReference type="GeneID" id="175858"/>
<dbReference type="KEGG" id="cel:CELE_C05D10.1"/>
<dbReference type="UCSC" id="C05D10.1c.2">
    <property type="organism name" value="c. elegans"/>
</dbReference>
<dbReference type="AGR" id="WB:WBGene00015477"/>
<dbReference type="CTD" id="175858"/>
<dbReference type="WormBase" id="C05D10.1a">
    <molecule id="Q11178-1"/>
    <property type="protein sequence ID" value="CE24783"/>
    <property type="gene ID" value="WBGene00015477"/>
    <property type="gene designation" value="attf-4"/>
</dbReference>
<dbReference type="WormBase" id="C05D10.1b">
    <molecule id="Q11178-2"/>
    <property type="protein sequence ID" value="CE30420"/>
    <property type="gene ID" value="WBGene00015477"/>
    <property type="gene designation" value="attf-4"/>
</dbReference>
<dbReference type="WormBase" id="C05D10.1c">
    <molecule id="Q11178-3"/>
    <property type="protein sequence ID" value="CE37698"/>
    <property type="gene ID" value="WBGene00015477"/>
    <property type="gene designation" value="attf-4"/>
</dbReference>
<dbReference type="eggNOG" id="ENOG502S76T">
    <property type="taxonomic scope" value="Eukaryota"/>
</dbReference>
<dbReference type="InParanoid" id="Q11178"/>
<dbReference type="OMA" id="HMARQYI"/>
<dbReference type="OrthoDB" id="5866640at2759"/>
<dbReference type="SignaLink" id="Q11178"/>
<dbReference type="PRO" id="PR:Q11178"/>
<dbReference type="Proteomes" id="UP000001940">
    <property type="component" value="Chromosome III"/>
</dbReference>
<dbReference type="Bgee" id="WBGene00015477">
    <property type="expression patterns" value="Expressed in pharyngeal muscle cell (C elegans) and 3 other cell types or tissues"/>
</dbReference>
<dbReference type="GO" id="GO:0003677">
    <property type="term" value="F:DNA binding"/>
    <property type="evidence" value="ECO:0007669"/>
    <property type="project" value="UniProtKB-KW"/>
</dbReference>
<dbReference type="InterPro" id="IPR038839">
    <property type="entry name" value="Attf-4-like"/>
</dbReference>
<dbReference type="PANTHER" id="PTHR36522">
    <property type="entry name" value="AT HOOK-CONTAINING PROTEIN ATTF-4"/>
    <property type="match status" value="1"/>
</dbReference>
<dbReference type="PANTHER" id="PTHR36522:SF1">
    <property type="entry name" value="AT HOOK-CONTAINING PROTEIN ATTF-4"/>
    <property type="match status" value="1"/>
</dbReference>
<feature type="chain" id="PRO_0000065145" description="AT hook-containing protein attf-4" evidence="3">
    <location>
        <begin position="1"/>
        <end position="529"/>
    </location>
</feature>
<feature type="DNA-binding region" description="A.T hook" evidence="1">
    <location>
        <begin position="307"/>
        <end position="319"/>
    </location>
</feature>
<feature type="region of interest" description="Disordered" evidence="2">
    <location>
        <begin position="1"/>
        <end position="39"/>
    </location>
</feature>
<feature type="region of interest" description="Disordered" evidence="2">
    <location>
        <begin position="131"/>
        <end position="158"/>
    </location>
</feature>
<feature type="region of interest" description="Disordered" evidence="2">
    <location>
        <begin position="173"/>
        <end position="200"/>
    </location>
</feature>
<feature type="region of interest" description="Disordered" evidence="2">
    <location>
        <begin position="233"/>
        <end position="255"/>
    </location>
</feature>
<feature type="region of interest" description="Disordered" evidence="2">
    <location>
        <begin position="436"/>
        <end position="476"/>
    </location>
</feature>
<feature type="compositionally biased region" description="Polar residues" evidence="2">
    <location>
        <begin position="19"/>
        <end position="31"/>
    </location>
</feature>
<feature type="compositionally biased region" description="Polar residues" evidence="2">
    <location>
        <begin position="138"/>
        <end position="153"/>
    </location>
</feature>
<feature type="compositionally biased region" description="Basic and acidic residues" evidence="2">
    <location>
        <begin position="179"/>
        <end position="189"/>
    </location>
</feature>
<feature type="compositionally biased region" description="Low complexity" evidence="2">
    <location>
        <begin position="233"/>
        <end position="248"/>
    </location>
</feature>
<feature type="compositionally biased region" description="Low complexity" evidence="2">
    <location>
        <begin position="443"/>
        <end position="455"/>
    </location>
</feature>
<feature type="compositionally biased region" description="Basic and acidic residues" evidence="2">
    <location>
        <begin position="458"/>
        <end position="469"/>
    </location>
</feature>
<feature type="splice variant" id="VSP_057814" description="In isoform c." evidence="3">
    <location>
        <begin position="1"/>
        <end position="72"/>
    </location>
</feature>
<feature type="splice variant" id="VSP_057815" description="In isoform b." evidence="3">
    <location>
        <begin position="1"/>
        <end position="35"/>
    </location>
</feature>
<feature type="splice variant" id="VSP_057816" description="In isoform b." evidence="3">
    <location>
        <begin position="130"/>
        <end position="198"/>
    </location>
</feature>
<keyword id="KW-0025">Alternative splicing</keyword>
<keyword id="KW-0238">DNA-binding</keyword>
<keyword id="KW-1185">Reference proteome</keyword>
<name>ATTF4_CAEEL</name>
<protein>
    <recommendedName>
        <fullName evidence="3">AT hook-containing protein attf-4</fullName>
    </recommendedName>
</protein>
<accession>Q11178</accession>
<accession>H2KYG7</accession>
<accession>Q5TYM0</accession>
<evidence type="ECO:0000255" key="1"/>
<evidence type="ECO:0000256" key="2">
    <source>
        <dbReference type="SAM" id="MobiDB-lite"/>
    </source>
</evidence>
<evidence type="ECO:0000305" key="3"/>
<evidence type="ECO:0000312" key="4">
    <source>
        <dbReference type="WormBase" id="C05D10.1a"/>
    </source>
</evidence>
<evidence type="ECO:0000312" key="5">
    <source>
        <dbReference type="WormBase" id="C05D10.1b"/>
    </source>
</evidence>
<evidence type="ECO:0000312" key="6">
    <source>
        <dbReference type="WormBase" id="C05D10.1c"/>
    </source>
</evidence>
<reference key="1">
    <citation type="journal article" date="1998" name="Science">
        <title>Genome sequence of the nematode C. elegans: a platform for investigating biology.</title>
        <authorList>
            <consortium name="The C. elegans sequencing consortium"/>
        </authorList>
    </citation>
    <scope>NUCLEOTIDE SEQUENCE [LARGE SCALE GENOMIC DNA]</scope>
    <source>
        <strain>Bristol N2</strain>
    </source>
</reference>
<organism>
    <name type="scientific">Caenorhabditis elegans</name>
    <dbReference type="NCBI Taxonomy" id="6239"/>
    <lineage>
        <taxon>Eukaryota</taxon>
        <taxon>Metazoa</taxon>
        <taxon>Ecdysozoa</taxon>
        <taxon>Nematoda</taxon>
        <taxon>Chromadorea</taxon>
        <taxon>Rhabditida</taxon>
        <taxon>Rhabditina</taxon>
        <taxon>Rhabditomorpha</taxon>
        <taxon>Rhabditoidea</taxon>
        <taxon>Rhabditidae</taxon>
        <taxon>Peloderinae</taxon>
        <taxon>Caenorhabditis</taxon>
    </lineage>
</organism>
<sequence>MLQPPTLTPNANGEEFRGSVSTDRSSASPSNIDEIMEDDVNQKDEDEDLNLVDRVSKLETNFVFIQHQLSSIMNHLHAPQCKCTTCSKVNQPGAEEQKNDTSVLSQLFPNASDQQLKTLLDLSKMNKLPSQVVHKDQQNGSSFLPSANKTSENPKPIELKPLKLGQGYQMANGGGGGKIHTERLSEPARKQSRKVGFPPPVASYYQRKESSNPLVPPTPLSSIPNLITNSNAVSANTSTASPGPSSEGSGDDHLEAPNEVAHMHSSTVPATPTTPGANLFTQSMVDMLKLNAQNAAHSTGSPGFLRGRGRGRPKLIGDELDADLVDYMVSLKNSDPHGGHFTASQALHMARQYILERAPGLLEEHGGHVKLKLTWAMKLVSRIGERQREIELGLPAGTLSNMGRNLTNIPAGGNFMADMMAQNIFSQHMMMVNQQLEGGSPPASSSSTATTSTATKTVKQESKNGHQNEENLNVKQEASTMPEIINIKELNLPFLNNFLAELNDNNSGLIDGEIGAAGPSMAALFAPNA</sequence>
<proteinExistence type="predicted"/>